<protein>
    <recommendedName>
        <fullName evidence="1 7">Peptidyl-prolyl cis-trans isomerase E</fullName>
        <shortName evidence="1">PPIase E</shortName>
        <ecNumber evidence="6">5.2.1.8</ecNumber>
    </recommendedName>
    <alternativeName>
        <fullName evidence="1">Cyclophiline 33</fullName>
        <shortName evidence="7">HcCYP</shortName>
    </alternativeName>
    <alternativeName>
        <fullName evidence="1">Cyclophiline E</fullName>
    </alternativeName>
    <alternativeName>
        <fullName evidence="1">Rotamase E</fullName>
    </alternativeName>
</protein>
<sequence>MAASNFPHNKKRTLYVGGFGEEVTEKVLMAAFITFGDIVAISIPMDYETGKHRGFGFVEFELAEDAAAAIDNMNESELFGRTIRCNFARPPKATERSSRPVWADDEWLKRYGKGSGIADAKESNGSASTAKGLPRVYLGVKIGIRYIGRIVIELRSDVVPRTAENFRCLCTGEKGFGYEGSSFHRIIPKFMLQGGDFTKGDGTGGKSIYGPKFEDENFKLKHLMPGTVSMANCGPNTNGSQFFICAEKTDWLDGKHVVFGHVVEGMNVVRQVEQQGTPSGKPQMVVKIVECGELDPVPQTEPQENEENSDPQTPMDVEPQKETA</sequence>
<evidence type="ECO:0000250" key="1">
    <source>
        <dbReference type="UniProtKB" id="Q9QZH3"/>
    </source>
</evidence>
<evidence type="ECO:0000255" key="2"/>
<evidence type="ECO:0000255" key="3">
    <source>
        <dbReference type="PROSITE-ProRule" id="PRU00156"/>
    </source>
</evidence>
<evidence type="ECO:0000255" key="4">
    <source>
        <dbReference type="PROSITE-ProRule" id="PRU00176"/>
    </source>
</evidence>
<evidence type="ECO:0000256" key="5">
    <source>
        <dbReference type="SAM" id="MobiDB-lite"/>
    </source>
</evidence>
<evidence type="ECO:0000269" key="6">
    <source>
    </source>
</evidence>
<evidence type="ECO:0000303" key="7">
    <source>
    </source>
</evidence>
<evidence type="ECO:0000305" key="8"/>
<evidence type="ECO:0000312" key="9">
    <source>
        <dbReference type="EMBL" id="AAW82658.1"/>
    </source>
</evidence>
<name>PPIE_HAECO</name>
<accession>Q4G338</accession>
<reference evidence="8 9" key="1">
    <citation type="journal article" date="2005" name="Parasitol. Res.">
        <title>Molecular and biochemical characterization of a protein cyclophilin from the nematode Haemonchus contortus.</title>
        <authorList>
            <person name="Valle C."/>
            <person name="Troiani A.R."/>
            <person name="Lazzaretti P."/>
            <person name="Bouvier J."/>
            <person name="Cioli D."/>
            <person name="Klinkert M.Q."/>
        </authorList>
    </citation>
    <scope>NUCLEOTIDE SEQUENCE [MRNA]</scope>
    <scope>FUNCTION</scope>
    <scope>CATALYTIC ACTIVITY</scope>
    <scope>ACTIVITY REGULATION</scope>
    <scope>RNA-BINDING</scope>
    <scope>SUBCELLULAR LOCATION</scope>
    <scope>DOMAIN</scope>
</reference>
<feature type="chain" id="PRO_0000423621" description="Peptidyl-prolyl cis-trans isomerase E">
    <location>
        <begin position="1"/>
        <end position="324"/>
    </location>
</feature>
<feature type="domain" description="RRM" evidence="4">
    <location>
        <begin position="12"/>
        <end position="90"/>
    </location>
</feature>
<feature type="domain" description="PPIase cyclophilin-type" evidence="3">
    <location>
        <begin position="137"/>
        <end position="293"/>
    </location>
</feature>
<feature type="region of interest" description="Disordered" evidence="5">
    <location>
        <begin position="291"/>
        <end position="324"/>
    </location>
</feature>
<dbReference type="EC" id="5.2.1.8" evidence="6"/>
<dbReference type="EMBL" id="AY754868">
    <property type="protein sequence ID" value="AAW82658.1"/>
    <property type="molecule type" value="mRNA"/>
</dbReference>
<dbReference type="SMR" id="Q4G338"/>
<dbReference type="BRENDA" id="5.2.1.8">
    <property type="organism ID" value="2523"/>
</dbReference>
<dbReference type="Proteomes" id="UP000025227">
    <property type="component" value="Unplaced"/>
</dbReference>
<dbReference type="GO" id="GO:0005739">
    <property type="term" value="C:mitochondrion"/>
    <property type="evidence" value="ECO:0007669"/>
    <property type="project" value="TreeGrafter"/>
</dbReference>
<dbReference type="GO" id="GO:0005634">
    <property type="term" value="C:nucleus"/>
    <property type="evidence" value="ECO:0000314"/>
    <property type="project" value="UniProtKB"/>
</dbReference>
<dbReference type="GO" id="GO:0016018">
    <property type="term" value="F:cyclosporin A binding"/>
    <property type="evidence" value="ECO:0007669"/>
    <property type="project" value="TreeGrafter"/>
</dbReference>
<dbReference type="GO" id="GO:0003677">
    <property type="term" value="F:DNA binding"/>
    <property type="evidence" value="ECO:0000314"/>
    <property type="project" value="UniProtKB"/>
</dbReference>
<dbReference type="GO" id="GO:0000166">
    <property type="term" value="F:nucleotide binding"/>
    <property type="evidence" value="ECO:0000314"/>
    <property type="project" value="UniProtKB"/>
</dbReference>
<dbReference type="GO" id="GO:0042277">
    <property type="term" value="F:peptide binding"/>
    <property type="evidence" value="ECO:0000314"/>
    <property type="project" value="UniProtKB"/>
</dbReference>
<dbReference type="GO" id="GO:0003755">
    <property type="term" value="F:peptidyl-prolyl cis-trans isomerase activity"/>
    <property type="evidence" value="ECO:0000314"/>
    <property type="project" value="UniProtKB"/>
</dbReference>
<dbReference type="GO" id="GO:0003723">
    <property type="term" value="F:RNA binding"/>
    <property type="evidence" value="ECO:0000314"/>
    <property type="project" value="UniProtKB"/>
</dbReference>
<dbReference type="GO" id="GO:0006457">
    <property type="term" value="P:protein folding"/>
    <property type="evidence" value="ECO:0000305"/>
    <property type="project" value="UniProtKB"/>
</dbReference>
<dbReference type="CDD" id="cd01926">
    <property type="entry name" value="cyclophilin_ABH_like"/>
    <property type="match status" value="1"/>
</dbReference>
<dbReference type="CDD" id="cd12347">
    <property type="entry name" value="RRM_PPIE"/>
    <property type="match status" value="1"/>
</dbReference>
<dbReference type="FunFam" id="2.40.100.10:FF:000046">
    <property type="entry name" value="Peptidyl-prolyl cis-trans isomerase E"/>
    <property type="match status" value="1"/>
</dbReference>
<dbReference type="FunFam" id="3.30.70.330:FF:000781">
    <property type="entry name" value="Peptidyl-prolyl cis-trans isomerase E"/>
    <property type="match status" value="1"/>
</dbReference>
<dbReference type="Gene3D" id="3.30.70.330">
    <property type="match status" value="1"/>
</dbReference>
<dbReference type="Gene3D" id="2.40.100.10">
    <property type="entry name" value="Cyclophilin-like"/>
    <property type="match status" value="1"/>
</dbReference>
<dbReference type="InterPro" id="IPR029000">
    <property type="entry name" value="Cyclophilin-like_dom_sf"/>
</dbReference>
<dbReference type="InterPro" id="IPR020892">
    <property type="entry name" value="Cyclophilin-type_PPIase_CS"/>
</dbReference>
<dbReference type="InterPro" id="IPR002130">
    <property type="entry name" value="Cyclophilin-type_PPIase_dom"/>
</dbReference>
<dbReference type="InterPro" id="IPR012677">
    <property type="entry name" value="Nucleotide-bd_a/b_plait_sf"/>
</dbReference>
<dbReference type="InterPro" id="IPR016304">
    <property type="entry name" value="PPIE"/>
</dbReference>
<dbReference type="InterPro" id="IPR034168">
    <property type="entry name" value="PPIE_RRM"/>
</dbReference>
<dbReference type="InterPro" id="IPR035979">
    <property type="entry name" value="RBD_domain_sf"/>
</dbReference>
<dbReference type="InterPro" id="IPR000504">
    <property type="entry name" value="RRM_dom"/>
</dbReference>
<dbReference type="PANTHER" id="PTHR11071">
    <property type="entry name" value="PEPTIDYL-PROLYL CIS-TRANS ISOMERASE"/>
    <property type="match status" value="1"/>
</dbReference>
<dbReference type="PANTHER" id="PTHR11071:SF575">
    <property type="entry name" value="PEPTIDYL-PROLYL CIS-TRANS ISOMERASE E"/>
    <property type="match status" value="1"/>
</dbReference>
<dbReference type="Pfam" id="PF00160">
    <property type="entry name" value="Pro_isomerase"/>
    <property type="match status" value="1"/>
</dbReference>
<dbReference type="Pfam" id="PF00076">
    <property type="entry name" value="RRM_1"/>
    <property type="match status" value="1"/>
</dbReference>
<dbReference type="PIRSF" id="PIRSF001475">
    <property type="entry name" value="PPI_cyclophilin_E"/>
    <property type="match status" value="1"/>
</dbReference>
<dbReference type="PRINTS" id="PR00153">
    <property type="entry name" value="CSAPPISMRASE"/>
</dbReference>
<dbReference type="SMART" id="SM00360">
    <property type="entry name" value="RRM"/>
    <property type="match status" value="1"/>
</dbReference>
<dbReference type="SUPFAM" id="SSF50891">
    <property type="entry name" value="Cyclophilin-like"/>
    <property type="match status" value="1"/>
</dbReference>
<dbReference type="SUPFAM" id="SSF54928">
    <property type="entry name" value="RNA-binding domain, RBD"/>
    <property type="match status" value="1"/>
</dbReference>
<dbReference type="PROSITE" id="PS00170">
    <property type="entry name" value="CSA_PPIASE_1"/>
    <property type="match status" value="1"/>
</dbReference>
<dbReference type="PROSITE" id="PS50072">
    <property type="entry name" value="CSA_PPIASE_2"/>
    <property type="match status" value="1"/>
</dbReference>
<dbReference type="PROSITE" id="PS50102">
    <property type="entry name" value="RRM"/>
    <property type="match status" value="1"/>
</dbReference>
<keyword id="KW-0413">Isomerase</keyword>
<keyword id="KW-0539">Nucleus</keyword>
<keyword id="KW-0694">RNA-binding</keyword>
<keyword id="KW-0697">Rotamase</keyword>
<organism>
    <name type="scientific">Haemonchus contortus</name>
    <name type="common">Barber pole worm</name>
    <dbReference type="NCBI Taxonomy" id="6289"/>
    <lineage>
        <taxon>Eukaryota</taxon>
        <taxon>Metazoa</taxon>
        <taxon>Ecdysozoa</taxon>
        <taxon>Nematoda</taxon>
        <taxon>Chromadorea</taxon>
        <taxon>Rhabditida</taxon>
        <taxon>Rhabditina</taxon>
        <taxon>Rhabditomorpha</taxon>
        <taxon>Strongyloidea</taxon>
        <taxon>Trichostrongylidae</taxon>
        <taxon>Haemonchus</taxon>
    </lineage>
</organism>
<proteinExistence type="evidence at protein level"/>
<comment type="function">
    <text evidence="6">PPIases accelerate the folding of proteins. It catalyzes the cis-trans isomerization of proline imidic peptide bonds in oligopeptides. Combines RNA-binding and PPIase activities.</text>
</comment>
<comment type="catalytic activity">
    <reaction evidence="6">
        <text>[protein]-peptidylproline (omega=180) = [protein]-peptidylproline (omega=0)</text>
        <dbReference type="Rhea" id="RHEA:16237"/>
        <dbReference type="Rhea" id="RHEA-COMP:10747"/>
        <dbReference type="Rhea" id="RHEA-COMP:10748"/>
        <dbReference type="ChEBI" id="CHEBI:83833"/>
        <dbReference type="ChEBI" id="CHEBI:83834"/>
        <dbReference type="EC" id="5.2.1.8"/>
    </reaction>
</comment>
<comment type="activity regulation">
    <text evidence="6">Inhibited by cyclosporin A.</text>
</comment>
<comment type="subcellular location">
    <subcellularLocation>
        <location evidence="6">Nucleus</location>
    </subcellularLocation>
</comment>
<comment type="domain">
    <text evidence="6">The N-terminal RRM domain binds to nucleic acids including single-stranded DNA and RNA homopolymers poly(A), poly(G) and poly(U), but not to poly(C) nor double-stranded DNA. Binds most strongly to G-rich RNA species.</text>
</comment>
<comment type="similarity">
    <text evidence="2">Belongs to the cyclophilin-type PPIase family. PPIase E subfamily.</text>
</comment>